<feature type="chain" id="PRO_0000065425" description="Serine/threonine-protein phosphatase Pgam5, mitochondrial">
    <location>
        <begin position="1"/>
        <end position="284"/>
    </location>
</feature>
<feature type="transmembrane region" description="Helical" evidence="2">
    <location>
        <begin position="8"/>
        <end position="24"/>
    </location>
</feature>
<reference key="1">
    <citation type="journal article" date="1998" name="Science">
        <title>Genome sequence of the nematode C. elegans: a platform for investigating biology.</title>
        <authorList>
            <consortium name="The C. elegans sequencing consortium"/>
        </authorList>
    </citation>
    <scope>NUCLEOTIDE SEQUENCE [LARGE SCALE GENOMIC DNA]</scope>
    <source>
        <strain>Bristol N2</strain>
    </source>
</reference>
<reference key="2">
    <citation type="journal article" date="2012" name="Cell Metab.">
        <title>Mitochondrial SKN-1/Nrf mediates a conserved starvation response.</title>
        <authorList>
            <person name="Paek J."/>
            <person name="Lo J.Y."/>
            <person name="Narasimhan S.D."/>
            <person name="Nguyen T.N."/>
            <person name="Glover-Cutter K."/>
            <person name="Robida-Stubbs S."/>
            <person name="Suzuki T."/>
            <person name="Yamamoto M."/>
            <person name="Blackwell T.K."/>
            <person name="Curran S.P."/>
        </authorList>
    </citation>
    <scope>INTERACTION WITH SNK-1</scope>
</reference>
<sequence>MVSKIIKLGVPTATLAVGTLLLGDDEKRSAFFRTASAFTQNHGHKTFDEHFPRGEWDKNWDFRDPISLVDKGKWEKADEEGKKKLIEEKKATATRNIFLIRHGQYHLDHEVKMLTPLGREQAELLGKRLANSDIKFTNMTMSTMVRATETANIILKHLPDDLTRTSSPFIEEGPPYPPVPDHKTWRPLDPEFYTEAARIESAYRKIFHRASPSQKEDSFELIVCHANVIRYFICRALQFPPEGWLRMSLGNCSLTWITIRPKGHVSVRSIGDIGHLPPNKISFT</sequence>
<comment type="function">
    <text evidence="1">Displays phosphatase activity for serine/threonine residues. Has apparently no phosphoglycerate mutase activity.</text>
</comment>
<comment type="catalytic activity">
    <reaction evidence="1">
        <text>O-phospho-L-seryl-[protein] + H2O = L-seryl-[protein] + phosphate</text>
        <dbReference type="Rhea" id="RHEA:20629"/>
        <dbReference type="Rhea" id="RHEA-COMP:9863"/>
        <dbReference type="Rhea" id="RHEA-COMP:11604"/>
        <dbReference type="ChEBI" id="CHEBI:15377"/>
        <dbReference type="ChEBI" id="CHEBI:29999"/>
        <dbReference type="ChEBI" id="CHEBI:43474"/>
        <dbReference type="ChEBI" id="CHEBI:83421"/>
        <dbReference type="EC" id="3.1.3.16"/>
    </reaction>
</comment>
<comment type="catalytic activity">
    <reaction evidence="1">
        <text>O-phospho-L-threonyl-[protein] + H2O = L-threonyl-[protein] + phosphate</text>
        <dbReference type="Rhea" id="RHEA:47004"/>
        <dbReference type="Rhea" id="RHEA-COMP:11060"/>
        <dbReference type="Rhea" id="RHEA-COMP:11605"/>
        <dbReference type="ChEBI" id="CHEBI:15377"/>
        <dbReference type="ChEBI" id="CHEBI:30013"/>
        <dbReference type="ChEBI" id="CHEBI:43474"/>
        <dbReference type="ChEBI" id="CHEBI:61977"/>
        <dbReference type="EC" id="3.1.3.16"/>
    </reaction>
</comment>
<comment type="subunit">
    <text evidence="3">Interacts with skn-1 isoforms a and c.</text>
</comment>
<comment type="subcellular location">
    <subcellularLocation>
        <location evidence="1">Mitochondrion outer membrane</location>
        <topology evidence="2">Single-pass membrane protein</topology>
    </subcellularLocation>
</comment>
<comment type="similarity">
    <text evidence="4">Belongs to the phosphoglycerate mutase family. BPG-dependent PGAM subfamily.</text>
</comment>
<proteinExistence type="evidence at protein level"/>
<dbReference type="EC" id="3.1.3.16" evidence="1"/>
<dbReference type="EMBL" id="BX284602">
    <property type="protein sequence ID" value="CCD70516.1"/>
    <property type="molecule type" value="Genomic_DNA"/>
</dbReference>
<dbReference type="PIR" id="T16702">
    <property type="entry name" value="T16702"/>
</dbReference>
<dbReference type="RefSeq" id="NP_495593.2">
    <property type="nucleotide sequence ID" value="NM_063192.4"/>
</dbReference>
<dbReference type="SMR" id="Q09422"/>
<dbReference type="BioGRID" id="39565">
    <property type="interactions" value="4"/>
</dbReference>
<dbReference type="FunCoup" id="Q09422">
    <property type="interactions" value="2512"/>
</dbReference>
<dbReference type="IntAct" id="Q09422">
    <property type="interactions" value="1"/>
</dbReference>
<dbReference type="STRING" id="6239.R07G3.5.1"/>
<dbReference type="PaxDb" id="6239-R07G3.5"/>
<dbReference type="PeptideAtlas" id="Q09422"/>
<dbReference type="EnsemblMetazoa" id="R07G3.5.1">
    <property type="protein sequence ID" value="R07G3.5.1"/>
    <property type="gene ID" value="WBGene00019941"/>
</dbReference>
<dbReference type="GeneID" id="174231"/>
<dbReference type="KEGG" id="cel:CELE_R07G3.5"/>
<dbReference type="UCSC" id="R07G3.5">
    <property type="organism name" value="c. elegans"/>
</dbReference>
<dbReference type="AGR" id="WB:WBGene00019941"/>
<dbReference type="CTD" id="174231"/>
<dbReference type="WormBase" id="R07G3.5">
    <property type="protein sequence ID" value="CE31979"/>
    <property type="gene ID" value="WBGene00019941"/>
    <property type="gene designation" value="pgam-5"/>
</dbReference>
<dbReference type="eggNOG" id="KOG4609">
    <property type="taxonomic scope" value="Eukaryota"/>
</dbReference>
<dbReference type="GeneTree" id="ENSGT00390000004796"/>
<dbReference type="HOGENOM" id="CLU_063130_1_1_1"/>
<dbReference type="InParanoid" id="Q09422"/>
<dbReference type="OMA" id="QLPLFAW"/>
<dbReference type="OrthoDB" id="2118094at2759"/>
<dbReference type="PhylomeDB" id="Q09422"/>
<dbReference type="Reactome" id="R-CEL-8934903">
    <property type="pathway name" value="Receptor Mediated Mitophagy"/>
</dbReference>
<dbReference type="Reactome" id="R-CEL-9861718">
    <property type="pathway name" value="Regulation of pyruvate metabolism"/>
</dbReference>
<dbReference type="PRO" id="PR:Q09422"/>
<dbReference type="Proteomes" id="UP000001940">
    <property type="component" value="Chromosome II"/>
</dbReference>
<dbReference type="Bgee" id="WBGene00019941">
    <property type="expression patterns" value="Expressed in germ line (C elegans) and 4 other cell types or tissues"/>
</dbReference>
<dbReference type="GO" id="GO:0005741">
    <property type="term" value="C:mitochondrial outer membrane"/>
    <property type="evidence" value="ECO:0007669"/>
    <property type="project" value="UniProtKB-SubCell"/>
</dbReference>
<dbReference type="GO" id="GO:0005739">
    <property type="term" value="C:mitochondrion"/>
    <property type="evidence" value="ECO:0000318"/>
    <property type="project" value="GO_Central"/>
</dbReference>
<dbReference type="GO" id="GO:0004721">
    <property type="term" value="F:phosphoprotein phosphatase activity"/>
    <property type="evidence" value="ECO:0000250"/>
    <property type="project" value="UniProtKB"/>
</dbReference>
<dbReference type="GO" id="GO:0004722">
    <property type="term" value="F:protein serine/threonine phosphatase activity"/>
    <property type="evidence" value="ECO:0000318"/>
    <property type="project" value="GO_Central"/>
</dbReference>
<dbReference type="GO" id="GO:0090141">
    <property type="term" value="P:positive regulation of mitochondrial fission"/>
    <property type="evidence" value="ECO:0000318"/>
    <property type="project" value="GO_Central"/>
</dbReference>
<dbReference type="GO" id="GO:0006470">
    <property type="term" value="P:protein dephosphorylation"/>
    <property type="evidence" value="ECO:0000250"/>
    <property type="project" value="UniProtKB"/>
</dbReference>
<dbReference type="CDD" id="cd07067">
    <property type="entry name" value="HP_PGM_like"/>
    <property type="match status" value="1"/>
</dbReference>
<dbReference type="FunFam" id="3.40.50.1240:FF:000009">
    <property type="entry name" value="serine/threonine-protein phosphatase PGAM5, mitochondrial isoform X1"/>
    <property type="match status" value="1"/>
</dbReference>
<dbReference type="Gene3D" id="3.40.50.1240">
    <property type="entry name" value="Phosphoglycerate mutase-like"/>
    <property type="match status" value="1"/>
</dbReference>
<dbReference type="InterPro" id="IPR013078">
    <property type="entry name" value="His_Pase_superF_clade-1"/>
</dbReference>
<dbReference type="InterPro" id="IPR029033">
    <property type="entry name" value="His_PPase_superfam"/>
</dbReference>
<dbReference type="InterPro" id="IPR051021">
    <property type="entry name" value="Mito_Ser/Thr_phosphatase"/>
</dbReference>
<dbReference type="PANTHER" id="PTHR20935">
    <property type="entry name" value="PHOSPHOGLYCERATE MUTASE-RELATED"/>
    <property type="match status" value="1"/>
</dbReference>
<dbReference type="PANTHER" id="PTHR20935:SF0">
    <property type="entry name" value="SERINE_THREONINE-PROTEIN PHOSPHATASE PGAM5, MITOCHONDRIAL"/>
    <property type="match status" value="1"/>
</dbReference>
<dbReference type="Pfam" id="PF00300">
    <property type="entry name" value="His_Phos_1"/>
    <property type="match status" value="2"/>
</dbReference>
<dbReference type="SMART" id="SM00855">
    <property type="entry name" value="PGAM"/>
    <property type="match status" value="1"/>
</dbReference>
<dbReference type="SUPFAM" id="SSF53254">
    <property type="entry name" value="Phosphoglycerate mutase-like"/>
    <property type="match status" value="1"/>
</dbReference>
<name>PGAM5_CAEEL</name>
<keyword id="KW-0378">Hydrolase</keyword>
<keyword id="KW-0472">Membrane</keyword>
<keyword id="KW-0496">Mitochondrion</keyword>
<keyword id="KW-1000">Mitochondrion outer membrane</keyword>
<keyword id="KW-1185">Reference proteome</keyword>
<keyword id="KW-0812">Transmembrane</keyword>
<keyword id="KW-1133">Transmembrane helix</keyword>
<accession>Q09422</accession>
<protein>
    <recommendedName>
        <fullName>Serine/threonine-protein phosphatase Pgam5, mitochondrial</fullName>
        <ecNumber evidence="1">3.1.3.16</ecNumber>
    </recommendedName>
    <alternativeName>
        <fullName>Phosphoglycerate mutase family member 5 homolog</fullName>
    </alternativeName>
</protein>
<organism>
    <name type="scientific">Caenorhabditis elegans</name>
    <dbReference type="NCBI Taxonomy" id="6239"/>
    <lineage>
        <taxon>Eukaryota</taxon>
        <taxon>Metazoa</taxon>
        <taxon>Ecdysozoa</taxon>
        <taxon>Nematoda</taxon>
        <taxon>Chromadorea</taxon>
        <taxon>Rhabditida</taxon>
        <taxon>Rhabditina</taxon>
        <taxon>Rhabditomorpha</taxon>
        <taxon>Rhabditoidea</taxon>
        <taxon>Rhabditidae</taxon>
        <taxon>Peloderinae</taxon>
        <taxon>Caenorhabditis</taxon>
    </lineage>
</organism>
<evidence type="ECO:0000250" key="1">
    <source>
        <dbReference type="UniProtKB" id="Q96HS1"/>
    </source>
</evidence>
<evidence type="ECO:0000255" key="2"/>
<evidence type="ECO:0000269" key="3">
    <source>
    </source>
</evidence>
<evidence type="ECO:0000305" key="4"/>
<gene>
    <name type="primary">pgam-5</name>
    <name type="ORF">R07G3.5</name>
</gene>